<accession>B1ICU3</accession>
<name>MURC_STRPI</name>
<dbReference type="EC" id="6.3.2.8" evidence="1"/>
<dbReference type="EMBL" id="CP000936">
    <property type="protein sequence ID" value="ACA37210.1"/>
    <property type="molecule type" value="Genomic_DNA"/>
</dbReference>
<dbReference type="RefSeq" id="WP_001127121.1">
    <property type="nucleotide sequence ID" value="NC_010380.1"/>
</dbReference>
<dbReference type="SMR" id="B1ICU3"/>
<dbReference type="KEGG" id="spv:SPH_1633"/>
<dbReference type="HOGENOM" id="CLU_028104_1_0_9"/>
<dbReference type="UniPathway" id="UPA00219"/>
<dbReference type="Proteomes" id="UP000002163">
    <property type="component" value="Chromosome"/>
</dbReference>
<dbReference type="GO" id="GO:0005737">
    <property type="term" value="C:cytoplasm"/>
    <property type="evidence" value="ECO:0007669"/>
    <property type="project" value="UniProtKB-SubCell"/>
</dbReference>
<dbReference type="GO" id="GO:0005524">
    <property type="term" value="F:ATP binding"/>
    <property type="evidence" value="ECO:0007669"/>
    <property type="project" value="UniProtKB-UniRule"/>
</dbReference>
<dbReference type="GO" id="GO:0008763">
    <property type="term" value="F:UDP-N-acetylmuramate-L-alanine ligase activity"/>
    <property type="evidence" value="ECO:0007669"/>
    <property type="project" value="UniProtKB-UniRule"/>
</dbReference>
<dbReference type="GO" id="GO:0051301">
    <property type="term" value="P:cell division"/>
    <property type="evidence" value="ECO:0007669"/>
    <property type="project" value="UniProtKB-KW"/>
</dbReference>
<dbReference type="GO" id="GO:0071555">
    <property type="term" value="P:cell wall organization"/>
    <property type="evidence" value="ECO:0007669"/>
    <property type="project" value="UniProtKB-KW"/>
</dbReference>
<dbReference type="GO" id="GO:0009252">
    <property type="term" value="P:peptidoglycan biosynthetic process"/>
    <property type="evidence" value="ECO:0007669"/>
    <property type="project" value="UniProtKB-UniRule"/>
</dbReference>
<dbReference type="GO" id="GO:0008360">
    <property type="term" value="P:regulation of cell shape"/>
    <property type="evidence" value="ECO:0007669"/>
    <property type="project" value="UniProtKB-KW"/>
</dbReference>
<dbReference type="Gene3D" id="3.90.190.20">
    <property type="entry name" value="Mur ligase, C-terminal domain"/>
    <property type="match status" value="1"/>
</dbReference>
<dbReference type="Gene3D" id="3.40.1190.10">
    <property type="entry name" value="Mur-like, catalytic domain"/>
    <property type="match status" value="1"/>
</dbReference>
<dbReference type="Gene3D" id="3.40.50.720">
    <property type="entry name" value="NAD(P)-binding Rossmann-like Domain"/>
    <property type="match status" value="1"/>
</dbReference>
<dbReference type="HAMAP" id="MF_00046">
    <property type="entry name" value="MurC"/>
    <property type="match status" value="1"/>
</dbReference>
<dbReference type="InterPro" id="IPR036565">
    <property type="entry name" value="Mur-like_cat_sf"/>
</dbReference>
<dbReference type="InterPro" id="IPR004101">
    <property type="entry name" value="Mur_ligase_C"/>
</dbReference>
<dbReference type="InterPro" id="IPR036615">
    <property type="entry name" value="Mur_ligase_C_dom_sf"/>
</dbReference>
<dbReference type="InterPro" id="IPR013221">
    <property type="entry name" value="Mur_ligase_cen"/>
</dbReference>
<dbReference type="InterPro" id="IPR000713">
    <property type="entry name" value="Mur_ligase_N"/>
</dbReference>
<dbReference type="InterPro" id="IPR050061">
    <property type="entry name" value="MurCDEF_pg_biosynth"/>
</dbReference>
<dbReference type="InterPro" id="IPR005758">
    <property type="entry name" value="UDP-N-AcMur_Ala_ligase_MurC"/>
</dbReference>
<dbReference type="NCBIfam" id="TIGR01082">
    <property type="entry name" value="murC"/>
    <property type="match status" value="1"/>
</dbReference>
<dbReference type="PANTHER" id="PTHR43445:SF3">
    <property type="entry name" value="UDP-N-ACETYLMURAMATE--L-ALANINE LIGASE"/>
    <property type="match status" value="1"/>
</dbReference>
<dbReference type="PANTHER" id="PTHR43445">
    <property type="entry name" value="UDP-N-ACETYLMURAMATE--L-ALANINE LIGASE-RELATED"/>
    <property type="match status" value="1"/>
</dbReference>
<dbReference type="Pfam" id="PF01225">
    <property type="entry name" value="Mur_ligase"/>
    <property type="match status" value="1"/>
</dbReference>
<dbReference type="Pfam" id="PF02875">
    <property type="entry name" value="Mur_ligase_C"/>
    <property type="match status" value="1"/>
</dbReference>
<dbReference type="Pfam" id="PF08245">
    <property type="entry name" value="Mur_ligase_M"/>
    <property type="match status" value="1"/>
</dbReference>
<dbReference type="SUPFAM" id="SSF51984">
    <property type="entry name" value="MurCD N-terminal domain"/>
    <property type="match status" value="1"/>
</dbReference>
<dbReference type="SUPFAM" id="SSF53623">
    <property type="entry name" value="MurD-like peptide ligases, catalytic domain"/>
    <property type="match status" value="1"/>
</dbReference>
<dbReference type="SUPFAM" id="SSF53244">
    <property type="entry name" value="MurD-like peptide ligases, peptide-binding domain"/>
    <property type="match status" value="1"/>
</dbReference>
<keyword id="KW-0067">ATP-binding</keyword>
<keyword id="KW-0131">Cell cycle</keyword>
<keyword id="KW-0132">Cell division</keyword>
<keyword id="KW-0133">Cell shape</keyword>
<keyword id="KW-0961">Cell wall biogenesis/degradation</keyword>
<keyword id="KW-0963">Cytoplasm</keyword>
<keyword id="KW-0436">Ligase</keyword>
<keyword id="KW-0547">Nucleotide-binding</keyword>
<keyword id="KW-0573">Peptidoglycan synthesis</keyword>
<organism>
    <name type="scientific">Streptococcus pneumoniae (strain Hungary19A-6)</name>
    <dbReference type="NCBI Taxonomy" id="487214"/>
    <lineage>
        <taxon>Bacteria</taxon>
        <taxon>Bacillati</taxon>
        <taxon>Bacillota</taxon>
        <taxon>Bacilli</taxon>
        <taxon>Lactobacillales</taxon>
        <taxon>Streptococcaceae</taxon>
        <taxon>Streptococcus</taxon>
    </lineage>
</organism>
<feature type="chain" id="PRO_1000091143" description="UDP-N-acetylmuramate--L-alanine ligase">
    <location>
        <begin position="1"/>
        <end position="444"/>
    </location>
</feature>
<feature type="binding site" evidence="1">
    <location>
        <begin position="110"/>
        <end position="116"/>
    </location>
    <ligand>
        <name>ATP</name>
        <dbReference type="ChEBI" id="CHEBI:30616"/>
    </ligand>
</feature>
<gene>
    <name evidence="1" type="primary">murC</name>
    <name type="ordered locus">SPH_1633</name>
</gene>
<evidence type="ECO:0000255" key="1">
    <source>
        <dbReference type="HAMAP-Rule" id="MF_00046"/>
    </source>
</evidence>
<comment type="function">
    <text evidence="1">Cell wall formation.</text>
</comment>
<comment type="catalytic activity">
    <reaction evidence="1">
        <text>UDP-N-acetyl-alpha-D-muramate + L-alanine + ATP = UDP-N-acetyl-alpha-D-muramoyl-L-alanine + ADP + phosphate + H(+)</text>
        <dbReference type="Rhea" id="RHEA:23372"/>
        <dbReference type="ChEBI" id="CHEBI:15378"/>
        <dbReference type="ChEBI" id="CHEBI:30616"/>
        <dbReference type="ChEBI" id="CHEBI:43474"/>
        <dbReference type="ChEBI" id="CHEBI:57972"/>
        <dbReference type="ChEBI" id="CHEBI:70757"/>
        <dbReference type="ChEBI" id="CHEBI:83898"/>
        <dbReference type="ChEBI" id="CHEBI:456216"/>
        <dbReference type="EC" id="6.3.2.8"/>
    </reaction>
</comment>
<comment type="pathway">
    <text evidence="1">Cell wall biogenesis; peptidoglycan biosynthesis.</text>
</comment>
<comment type="subcellular location">
    <subcellularLocation>
        <location evidence="1">Cytoplasm</location>
    </subcellularLocation>
</comment>
<comment type="similarity">
    <text evidence="1">Belongs to the MurCDEF family.</text>
</comment>
<protein>
    <recommendedName>
        <fullName evidence="1">UDP-N-acetylmuramate--L-alanine ligase</fullName>
        <ecNumber evidence="1">6.3.2.8</ecNumber>
    </recommendedName>
    <alternativeName>
        <fullName evidence="1">UDP-N-acetylmuramoyl-L-alanine synthetase</fullName>
    </alternativeName>
</protein>
<proteinExistence type="inferred from homology"/>
<sequence length="444" mass="49900">MPKTYHFIGIKGSGMSALALMLHQMGHKVQGSDVEKYYFTQRGLEQAGITILPFDEKNLDGDMEIIAGNAFRPDNNVEIAYADQNGISYKRYHEFLGSFMRDFVSMGVAGAHGKTSTTGMLSHVLSHITDTSFLIGDGTGRGSANAKYFVFESDEYERHFMPYHPEYSIITNIDFDHPDYFTSLEDVFNAFNDYAKQITKGLFVYGEDAELRKITSDAPIYYYGFEAEGNDFVASDLLRSTTGSTFTVHFRGQNLGQFHIPTFGRHNIMNATAVIGLLYTAGFDLNLVREHLKTFSGVKRRFTEKIVNDTVIIDDFAHHPTEIIATLDAARQKYPSKEIVAVFQPHTFTRTIALLDDFAHALNQADAVYLAQIYGSAREVDHGDVKVEDLANKINKKHQVITVENVSPLLDHDNAVYVFMGAGDIQTYEYSFERLLSNLTSNVQ</sequence>
<reference key="1">
    <citation type="journal article" date="2010" name="Genome Biol.">
        <title>Structure and dynamics of the pan-genome of Streptococcus pneumoniae and closely related species.</title>
        <authorList>
            <person name="Donati C."/>
            <person name="Hiller N.L."/>
            <person name="Tettelin H."/>
            <person name="Muzzi A."/>
            <person name="Croucher N.J."/>
            <person name="Angiuoli S.V."/>
            <person name="Oggioni M."/>
            <person name="Dunning Hotopp J.C."/>
            <person name="Hu F.Z."/>
            <person name="Riley D.R."/>
            <person name="Covacci A."/>
            <person name="Mitchell T.J."/>
            <person name="Bentley S.D."/>
            <person name="Kilian M."/>
            <person name="Ehrlich G.D."/>
            <person name="Rappuoli R."/>
            <person name="Moxon E.R."/>
            <person name="Masignani V."/>
        </authorList>
    </citation>
    <scope>NUCLEOTIDE SEQUENCE [LARGE SCALE GENOMIC DNA]</scope>
    <source>
        <strain>Hungary19A-6</strain>
    </source>
</reference>